<protein>
    <recommendedName>
        <fullName evidence="1">tRNA(Met) cytidine acetate ligase</fullName>
        <ecNumber evidence="1">6.3.4.-</ecNumber>
    </recommendedName>
</protein>
<proteinExistence type="inferred from homology"/>
<feature type="chain" id="PRO_0000300181" description="tRNA(Met) cytidine acetate ligase">
    <location>
        <begin position="1"/>
        <end position="392"/>
    </location>
</feature>
<feature type="binding site" evidence="1">
    <location>
        <begin position="7"/>
        <end position="20"/>
    </location>
    <ligand>
        <name>ATP</name>
        <dbReference type="ChEBI" id="CHEBI:30616"/>
    </ligand>
</feature>
<feature type="binding site" evidence="1">
    <location>
        <position position="101"/>
    </location>
    <ligand>
        <name>ATP</name>
        <dbReference type="ChEBI" id="CHEBI:30616"/>
    </ligand>
</feature>
<feature type="binding site" evidence="1">
    <location>
        <position position="162"/>
    </location>
    <ligand>
        <name>ATP</name>
        <dbReference type="ChEBI" id="CHEBI:30616"/>
    </ligand>
</feature>
<feature type="binding site" evidence="1">
    <location>
        <begin position="187"/>
        <end position="188"/>
    </location>
    <ligand>
        <name>ATP</name>
        <dbReference type="ChEBI" id="CHEBI:30616"/>
    </ligand>
</feature>
<evidence type="ECO:0000255" key="1">
    <source>
        <dbReference type="HAMAP-Rule" id="MF_01539"/>
    </source>
</evidence>
<comment type="function">
    <text evidence="1">Catalyzes the formation of N(4)-acetylcytidine (ac(4)C) at the wobble position of elongator tRNA(Met), using acetate and ATP as substrates. First activates an acetate ion to form acetyladenylate (Ac-AMP) and then transfers the acetyl group to tRNA to form ac(4)C34.</text>
</comment>
<comment type="catalytic activity">
    <reaction evidence="1">
        <text>cytidine(34) in elongator tRNA(Met) + acetate + ATP = N(4)-acetylcytidine(34) in elongator tRNA(Met) + AMP + diphosphate</text>
        <dbReference type="Rhea" id="RHEA:58144"/>
        <dbReference type="Rhea" id="RHEA-COMP:10693"/>
        <dbReference type="Rhea" id="RHEA-COMP:10694"/>
        <dbReference type="ChEBI" id="CHEBI:30089"/>
        <dbReference type="ChEBI" id="CHEBI:30616"/>
        <dbReference type="ChEBI" id="CHEBI:33019"/>
        <dbReference type="ChEBI" id="CHEBI:74900"/>
        <dbReference type="ChEBI" id="CHEBI:82748"/>
        <dbReference type="ChEBI" id="CHEBI:456215"/>
    </reaction>
</comment>
<comment type="subcellular location">
    <subcellularLocation>
        <location evidence="1">Cytoplasm</location>
    </subcellularLocation>
</comment>
<comment type="similarity">
    <text evidence="1">Belongs to the TmcAL family.</text>
</comment>
<sequence length="392" mass="43823">MKATGIVVEYNPFHNGHQLHLNKARELTKADVVIAVMSGSFVQRGEPAILPKWERTKMALAAGVDMVVELPVSFATQHATIFAEESVRILDALHVDALFFGSEHGVSEDFLTAAKTVVEHEASFNQAIQLALIDKKTSYARAYTETFKQSFGTELLDVTKPNNILGFHYALAIQKQNPTISLQTMARIHAGYHDIEANHDQIASATAIRKLLLAGNLEEASRYLPASSIEILKNYDGPFLSWENYWALLKYRLIQAETDELEGIRNVSEGIQNRMQIAATKAQYFSDFIESMKTKRYSNARIQRTALQILLNARNIPSAPYIRILGMNKTGQKYLSHHKKNISLPIVTTVSKAAPGLLEEDLRATNIYTLVKGLENYQAGDFHIPPILKSQT</sequence>
<keyword id="KW-0067">ATP-binding</keyword>
<keyword id="KW-0963">Cytoplasm</keyword>
<keyword id="KW-0436">Ligase</keyword>
<keyword id="KW-0547">Nucleotide-binding</keyword>
<keyword id="KW-0694">RNA-binding</keyword>
<keyword id="KW-0819">tRNA processing</keyword>
<keyword id="KW-0820">tRNA-binding</keyword>
<organism>
    <name type="scientific">Listeria welshimeri serovar 6b (strain ATCC 35897 / DSM 20650 / CCUG 15529 / CIP 8149 / NCTC 11857 / SLCC 5334 / V8)</name>
    <dbReference type="NCBI Taxonomy" id="386043"/>
    <lineage>
        <taxon>Bacteria</taxon>
        <taxon>Bacillati</taxon>
        <taxon>Bacillota</taxon>
        <taxon>Bacilli</taxon>
        <taxon>Bacillales</taxon>
        <taxon>Listeriaceae</taxon>
        <taxon>Listeria</taxon>
    </lineage>
</organism>
<accession>A0AKE9</accession>
<gene>
    <name evidence="1" type="primary">tmcAL</name>
    <name type="ordered locus">lwe2063</name>
</gene>
<name>TMCAL_LISW6</name>
<dbReference type="EC" id="6.3.4.-" evidence="1"/>
<dbReference type="EMBL" id="AM263198">
    <property type="protein sequence ID" value="CAK21481.1"/>
    <property type="molecule type" value="Genomic_DNA"/>
</dbReference>
<dbReference type="RefSeq" id="WP_011702825.1">
    <property type="nucleotide sequence ID" value="NC_008555.1"/>
</dbReference>
<dbReference type="SMR" id="A0AKE9"/>
<dbReference type="STRING" id="386043.lwe2063"/>
<dbReference type="GeneID" id="61189963"/>
<dbReference type="KEGG" id="lwe:lwe2063"/>
<dbReference type="eggNOG" id="COG1323">
    <property type="taxonomic scope" value="Bacteria"/>
</dbReference>
<dbReference type="HOGENOM" id="CLU_038915_0_2_9"/>
<dbReference type="OrthoDB" id="9769796at2"/>
<dbReference type="Proteomes" id="UP000000779">
    <property type="component" value="Chromosome"/>
</dbReference>
<dbReference type="GO" id="GO:0005737">
    <property type="term" value="C:cytoplasm"/>
    <property type="evidence" value="ECO:0007669"/>
    <property type="project" value="UniProtKB-SubCell"/>
</dbReference>
<dbReference type="GO" id="GO:0005524">
    <property type="term" value="F:ATP binding"/>
    <property type="evidence" value="ECO:0007669"/>
    <property type="project" value="UniProtKB-KW"/>
</dbReference>
<dbReference type="GO" id="GO:0016879">
    <property type="term" value="F:ligase activity, forming carbon-nitrogen bonds"/>
    <property type="evidence" value="ECO:0007669"/>
    <property type="project" value="UniProtKB-UniRule"/>
</dbReference>
<dbReference type="GO" id="GO:0000049">
    <property type="term" value="F:tRNA binding"/>
    <property type="evidence" value="ECO:0007669"/>
    <property type="project" value="UniProtKB-KW"/>
</dbReference>
<dbReference type="GO" id="GO:0006400">
    <property type="term" value="P:tRNA modification"/>
    <property type="evidence" value="ECO:0007669"/>
    <property type="project" value="UniProtKB-UniRule"/>
</dbReference>
<dbReference type="Gene3D" id="3.40.50.620">
    <property type="entry name" value="HUPs"/>
    <property type="match status" value="1"/>
</dbReference>
<dbReference type="HAMAP" id="MF_01539">
    <property type="entry name" value="TmcAL"/>
    <property type="match status" value="1"/>
</dbReference>
<dbReference type="InterPro" id="IPR014729">
    <property type="entry name" value="Rossmann-like_a/b/a_fold"/>
</dbReference>
<dbReference type="InterPro" id="IPR008513">
    <property type="entry name" value="tRNA(Met)_cyd_acetate_ligase"/>
</dbReference>
<dbReference type="NCBIfam" id="NF010191">
    <property type="entry name" value="PRK13670.1"/>
    <property type="match status" value="1"/>
</dbReference>
<dbReference type="PANTHER" id="PTHR37825">
    <property type="entry name" value="TRNA(MET) CYTIDINE ACETATE LIGASE"/>
    <property type="match status" value="1"/>
</dbReference>
<dbReference type="PANTHER" id="PTHR37825:SF1">
    <property type="entry name" value="TRNA(MET) CYTIDINE ACETATE LIGASE"/>
    <property type="match status" value="1"/>
</dbReference>
<dbReference type="Pfam" id="PF05636">
    <property type="entry name" value="HIGH_NTase1"/>
    <property type="match status" value="1"/>
</dbReference>
<dbReference type="SUPFAM" id="SSF52374">
    <property type="entry name" value="Nucleotidylyl transferase"/>
    <property type="match status" value="1"/>
</dbReference>
<reference key="1">
    <citation type="journal article" date="2006" name="J. Bacteriol.">
        <title>Whole-genome sequence of Listeria welshimeri reveals common steps in genome reduction with Listeria innocua as compared to Listeria monocytogenes.</title>
        <authorList>
            <person name="Hain T."/>
            <person name="Steinweg C."/>
            <person name="Kuenne C.T."/>
            <person name="Billion A."/>
            <person name="Ghai R."/>
            <person name="Chatterjee S.S."/>
            <person name="Domann E."/>
            <person name="Kaerst U."/>
            <person name="Goesmann A."/>
            <person name="Bekel T."/>
            <person name="Bartels D."/>
            <person name="Kaiser O."/>
            <person name="Meyer F."/>
            <person name="Puehler A."/>
            <person name="Weisshaar B."/>
            <person name="Wehland J."/>
            <person name="Liang C."/>
            <person name="Dandekar T."/>
            <person name="Lampidis R."/>
            <person name="Kreft J."/>
            <person name="Goebel W."/>
            <person name="Chakraborty T."/>
        </authorList>
    </citation>
    <scope>NUCLEOTIDE SEQUENCE [LARGE SCALE GENOMIC DNA]</scope>
    <source>
        <strain>ATCC 35897 / DSM 20650 / CCUG 15529 / CIP 8149 / NCTC 11857 / SLCC 5334 / V8</strain>
    </source>
</reference>